<dbReference type="EMBL" id="CU928165">
    <property type="protein sequence ID" value="CAR21233.1"/>
    <property type="molecule type" value="Genomic_DNA"/>
</dbReference>
<dbReference type="RefSeq" id="XP_002551675.1">
    <property type="nucleotide sequence ID" value="XM_002551629.1"/>
</dbReference>
<dbReference type="FunCoup" id="C5DBS6">
    <property type="interactions" value="26"/>
</dbReference>
<dbReference type="STRING" id="559295.C5DBS6"/>
<dbReference type="GeneID" id="8290479"/>
<dbReference type="KEGG" id="lth:KLTH0A05016g"/>
<dbReference type="eggNOG" id="ENOG502QV1E">
    <property type="taxonomic scope" value="Eukaryota"/>
</dbReference>
<dbReference type="HOGENOM" id="CLU_019189_0_1_1"/>
<dbReference type="InParanoid" id="C5DBS6"/>
<dbReference type="OMA" id="GWIPQDM"/>
<dbReference type="OrthoDB" id="2968323at2759"/>
<dbReference type="Proteomes" id="UP000002036">
    <property type="component" value="Chromosome A"/>
</dbReference>
<dbReference type="GO" id="GO:0005739">
    <property type="term" value="C:mitochondrion"/>
    <property type="evidence" value="ECO:0007669"/>
    <property type="project" value="UniProtKB-SubCell"/>
</dbReference>
<dbReference type="InterPro" id="IPR011009">
    <property type="entry name" value="Kinase-like_dom_sf"/>
</dbReference>
<dbReference type="InterPro" id="IPR051035">
    <property type="entry name" value="Mito_inheritance_9"/>
</dbReference>
<dbReference type="PANTHER" id="PTHR36091">
    <property type="entry name" value="ALTERED INHERITANCE OF MITOCHONDRIA PROTEIN 9, MITOCHONDRIAL"/>
    <property type="match status" value="1"/>
</dbReference>
<dbReference type="PANTHER" id="PTHR36091:SF1">
    <property type="entry name" value="ALTERED INHERITANCE OF MITOCHONDRIA PROTEIN 9, MITOCHONDRIAL"/>
    <property type="match status" value="1"/>
</dbReference>
<dbReference type="SUPFAM" id="SSF56112">
    <property type="entry name" value="Protein kinase-like (PK-like)"/>
    <property type="match status" value="1"/>
</dbReference>
<reference key="1">
    <citation type="journal article" date="2009" name="Genome Res.">
        <title>Comparative genomics of protoploid Saccharomycetaceae.</title>
        <authorList>
            <consortium name="The Genolevures Consortium"/>
            <person name="Souciet J.-L."/>
            <person name="Dujon B."/>
            <person name="Gaillardin C."/>
            <person name="Johnston M."/>
            <person name="Baret P.V."/>
            <person name="Cliften P."/>
            <person name="Sherman D.J."/>
            <person name="Weissenbach J."/>
            <person name="Westhof E."/>
            <person name="Wincker P."/>
            <person name="Jubin C."/>
            <person name="Poulain J."/>
            <person name="Barbe V."/>
            <person name="Segurens B."/>
            <person name="Artiguenave F."/>
            <person name="Anthouard V."/>
            <person name="Vacherie B."/>
            <person name="Val M.-E."/>
            <person name="Fulton R.S."/>
            <person name="Minx P."/>
            <person name="Wilson R."/>
            <person name="Durrens P."/>
            <person name="Jean G."/>
            <person name="Marck C."/>
            <person name="Martin T."/>
            <person name="Nikolski M."/>
            <person name="Rolland T."/>
            <person name="Seret M.-L."/>
            <person name="Casaregola S."/>
            <person name="Despons L."/>
            <person name="Fairhead C."/>
            <person name="Fischer G."/>
            <person name="Lafontaine I."/>
            <person name="Leh V."/>
            <person name="Lemaire M."/>
            <person name="de Montigny J."/>
            <person name="Neuveglise C."/>
            <person name="Thierry A."/>
            <person name="Blanc-Lenfle I."/>
            <person name="Bleykasten C."/>
            <person name="Diffels J."/>
            <person name="Fritsch E."/>
            <person name="Frangeul L."/>
            <person name="Goeffon A."/>
            <person name="Jauniaux N."/>
            <person name="Kachouri-Lafond R."/>
            <person name="Payen C."/>
            <person name="Potier S."/>
            <person name="Pribylova L."/>
            <person name="Ozanne C."/>
            <person name="Richard G.-F."/>
            <person name="Sacerdot C."/>
            <person name="Straub M.-L."/>
            <person name="Talla E."/>
        </authorList>
    </citation>
    <scope>NUCLEOTIDE SEQUENCE [LARGE SCALE GENOMIC DNA]</scope>
    <source>
        <strain>ATCC 56472 / CBS 6340 / NRRL Y-8284</strain>
    </source>
</reference>
<sequence>MLRYNLRIPVQAKKAMGSLAPLRPMKSRFGLRCISDKPNEVFTKLSDDNDPQRDAFFKYSWGSWLANDRQEKEKRTTKFSIEGLTDVINDLHAQSKEKAKSEASEGNIPPPSYNPNLTVSLSHNLSALTLGSLNPNETLRVTAMASIHEGKHHRIYKVDTNADKSFILRIPYATNSEAAISYRLKSEVATMDFADLKLGLKVPKVYCFGANALNPIRQPFILEEHIEGRLLMRDWNPLEDDASDKKAHISKLNKVIDPLSQFQSKLLSVEFNQFGSLYFAKDYPDSEGPAYEGEKNESLKNRWSVGPSVERCFWRQKSALPLDKLMQFVGPWSKSKPMDIVKSLGLLEAENAKSRLALQQTDASPAPIEESILREQVRTFENLAEISSSLFNTKSHVIPNIDSLLKPRLYHPDLDPMNVLLDEKDNSAPYLLDFENTSIKPFILQNSPQFVAYDGPKIYNLEEDVEGYKDLSEAEKVQYQFMYKRTRNQHLWESALNKNFNKLISAVAPPVKLLRSPYVACVERKNDMEYLLVDESLIQLREVWEVFAKNKLVSEKKFPLEYTEEQLQKHSTDLNAFHEQLIKSPFAATQGWIPQDMFENLVKAGILIKDKNGDYTIKQ</sequence>
<protein>
    <recommendedName>
        <fullName>Altered inheritance of mitochondria protein 9, mitochondrial</fullName>
    </recommendedName>
    <alternativeName>
        <fullName>Found in mitochondrial proteome protein 29</fullName>
    </alternativeName>
</protein>
<feature type="transit peptide" description="Mitochondrion" evidence="2">
    <location>
        <begin position="1"/>
        <end position="34"/>
    </location>
</feature>
<feature type="chain" id="PRO_0000408724" description="Altered inheritance of mitochondria protein 9, mitochondrial">
    <location>
        <begin position="35"/>
        <end position="619"/>
    </location>
</feature>
<feature type="region of interest" description="Disordered" evidence="3">
    <location>
        <begin position="95"/>
        <end position="115"/>
    </location>
</feature>
<accession>C5DBS6</accession>
<comment type="subcellular location">
    <subcellularLocation>
        <location evidence="1">Mitochondrion</location>
    </subcellularLocation>
</comment>
<comment type="similarity">
    <text evidence="4">Belongs to the AIM9 family.</text>
</comment>
<name>AIM9_LACTC</name>
<keyword id="KW-0496">Mitochondrion</keyword>
<keyword id="KW-1185">Reference proteome</keyword>
<keyword id="KW-0809">Transit peptide</keyword>
<organism>
    <name type="scientific">Lachancea thermotolerans (strain ATCC 56472 / CBS 6340 / NRRL Y-8284)</name>
    <name type="common">Yeast</name>
    <name type="synonym">Kluyveromyces thermotolerans</name>
    <dbReference type="NCBI Taxonomy" id="559295"/>
    <lineage>
        <taxon>Eukaryota</taxon>
        <taxon>Fungi</taxon>
        <taxon>Dikarya</taxon>
        <taxon>Ascomycota</taxon>
        <taxon>Saccharomycotina</taxon>
        <taxon>Saccharomycetes</taxon>
        <taxon>Saccharomycetales</taxon>
        <taxon>Saccharomycetaceae</taxon>
        <taxon>Lachancea</taxon>
    </lineage>
</organism>
<evidence type="ECO:0000250" key="1"/>
<evidence type="ECO:0000255" key="2"/>
<evidence type="ECO:0000256" key="3">
    <source>
        <dbReference type="SAM" id="MobiDB-lite"/>
    </source>
</evidence>
<evidence type="ECO:0000305" key="4"/>
<gene>
    <name type="primary">AIM9</name>
    <name type="synonym">FMP29</name>
    <name type="ordered locus">KLTH0A05016g</name>
</gene>
<proteinExistence type="inferred from homology"/>